<sequence length="251" mass="28593">MNKHERLDEIAKLVNKKGTIRTNEIVEGLNVSDMTVRRDLIELENKGILTKIHGGARSNSTFQYKEISHKEKHTRQIAEKRYIARKAASLIEDGDTLFFGPGTTVELLAEEVNHHTLTIITNCLPVYKILLEKQTAHFRVYLIGGEMRHITEAFVGEMANAMLEKLRFSKMFFSSNAVNKGAVMTSTLDEAYTQQLALSNSIEKYLLIDHTKVGKEDFTSFCQLNELTAVVMDYEDEEKVETIKTYIEVVD</sequence>
<proteinExistence type="evidence at protein level"/>
<evidence type="ECO:0000250" key="1"/>
<evidence type="ECO:0000255" key="2">
    <source>
        <dbReference type="PROSITE-ProRule" id="PRU00349"/>
    </source>
</evidence>
<reference key="1">
    <citation type="journal article" date="2001" name="Lancet">
        <title>Whole genome sequencing of meticillin-resistant Staphylococcus aureus.</title>
        <authorList>
            <person name="Kuroda M."/>
            <person name="Ohta T."/>
            <person name="Uchiyama I."/>
            <person name="Baba T."/>
            <person name="Yuzawa H."/>
            <person name="Kobayashi I."/>
            <person name="Cui L."/>
            <person name="Oguchi A."/>
            <person name="Aoki K."/>
            <person name="Nagai Y."/>
            <person name="Lian J.-Q."/>
            <person name="Ito T."/>
            <person name="Kanamori M."/>
            <person name="Matsumaru H."/>
            <person name="Maruyama A."/>
            <person name="Murakami H."/>
            <person name="Hosoyama A."/>
            <person name="Mizutani-Ui Y."/>
            <person name="Takahashi N.K."/>
            <person name="Sawano T."/>
            <person name="Inoue R."/>
            <person name="Kaito C."/>
            <person name="Sekimizu K."/>
            <person name="Hirakawa H."/>
            <person name="Kuhara S."/>
            <person name="Goto S."/>
            <person name="Yabuzaki J."/>
            <person name="Kanehisa M."/>
            <person name="Yamashita A."/>
            <person name="Oshima K."/>
            <person name="Furuya K."/>
            <person name="Yoshino C."/>
            <person name="Shiba T."/>
            <person name="Hattori M."/>
            <person name="Ogasawara N."/>
            <person name="Hayashi H."/>
            <person name="Hiramatsu K."/>
        </authorList>
    </citation>
    <scope>NUCLEOTIDE SEQUENCE [LARGE SCALE GENOMIC DNA]</scope>
    <source>
        <strain>N315</strain>
    </source>
</reference>
<reference key="2">
    <citation type="submission" date="2007-10" db="UniProtKB">
        <title>Shotgun proteomic analysis of total and membrane protein extracts of S. aureus strain N315.</title>
        <authorList>
            <person name="Vaezzadeh A.R."/>
            <person name="Deshusses J."/>
            <person name="Lescuyer P."/>
            <person name="Hochstrasser D.F."/>
        </authorList>
    </citation>
    <scope>IDENTIFICATION BY MASS SPECTROMETRY [LARGE SCALE ANALYSIS]</scope>
    <source>
        <strain>N315</strain>
    </source>
</reference>
<keyword id="KW-0238">DNA-binding</keyword>
<keyword id="KW-0423">Lactose metabolism</keyword>
<keyword id="KW-0678">Repressor</keyword>
<keyword id="KW-0804">Transcription</keyword>
<keyword id="KW-0805">Transcription regulation</keyword>
<gene>
    <name type="primary">lacR</name>
    <name type="ordered locus">SA1998</name>
</gene>
<dbReference type="EMBL" id="BA000018">
    <property type="protein sequence ID" value="BAB43288.1"/>
    <property type="molecule type" value="Genomic_DNA"/>
</dbReference>
<dbReference type="PIR" id="G90015">
    <property type="entry name" value="G90015"/>
</dbReference>
<dbReference type="RefSeq" id="WP_001032746.1">
    <property type="nucleotide sequence ID" value="NC_002745.2"/>
</dbReference>
<dbReference type="SMR" id="P67744"/>
<dbReference type="EnsemblBacteria" id="BAB43288">
    <property type="protein sequence ID" value="BAB43288"/>
    <property type="gene ID" value="BAB43288"/>
</dbReference>
<dbReference type="KEGG" id="sau:SA1998"/>
<dbReference type="HOGENOM" id="CLU_060699_1_0_9"/>
<dbReference type="GO" id="GO:0003677">
    <property type="term" value="F:DNA binding"/>
    <property type="evidence" value="ECO:0007669"/>
    <property type="project" value="UniProtKB-KW"/>
</dbReference>
<dbReference type="GO" id="GO:0003700">
    <property type="term" value="F:DNA-binding transcription factor activity"/>
    <property type="evidence" value="ECO:0007669"/>
    <property type="project" value="InterPro"/>
</dbReference>
<dbReference type="GO" id="GO:0005988">
    <property type="term" value="P:lactose metabolic process"/>
    <property type="evidence" value="ECO:0007669"/>
    <property type="project" value="UniProtKB-KW"/>
</dbReference>
<dbReference type="Gene3D" id="3.40.50.1360">
    <property type="match status" value="1"/>
</dbReference>
<dbReference type="Gene3D" id="1.10.10.10">
    <property type="entry name" value="Winged helix-like DNA-binding domain superfamily/Winged helix DNA-binding domain"/>
    <property type="match status" value="1"/>
</dbReference>
<dbReference type="InterPro" id="IPR050313">
    <property type="entry name" value="Carb_Metab_HTH_regulators"/>
</dbReference>
<dbReference type="InterPro" id="IPR014036">
    <property type="entry name" value="DeoR-like_C"/>
</dbReference>
<dbReference type="InterPro" id="IPR001034">
    <property type="entry name" value="DeoR_HTH"/>
</dbReference>
<dbReference type="InterPro" id="IPR037171">
    <property type="entry name" value="NagB/RpiA_transferase-like"/>
</dbReference>
<dbReference type="InterPro" id="IPR018356">
    <property type="entry name" value="Tscrpt_reg_HTH_DeoR_CS"/>
</dbReference>
<dbReference type="InterPro" id="IPR036388">
    <property type="entry name" value="WH-like_DNA-bd_sf"/>
</dbReference>
<dbReference type="InterPro" id="IPR036390">
    <property type="entry name" value="WH_DNA-bd_sf"/>
</dbReference>
<dbReference type="PANTHER" id="PTHR30363:SF4">
    <property type="entry name" value="GLYCEROL-3-PHOSPHATE REGULON REPRESSOR"/>
    <property type="match status" value="1"/>
</dbReference>
<dbReference type="PANTHER" id="PTHR30363">
    <property type="entry name" value="HTH-TYPE TRANSCRIPTIONAL REGULATOR SRLR-RELATED"/>
    <property type="match status" value="1"/>
</dbReference>
<dbReference type="Pfam" id="PF00455">
    <property type="entry name" value="DeoRC"/>
    <property type="match status" value="1"/>
</dbReference>
<dbReference type="Pfam" id="PF08220">
    <property type="entry name" value="HTH_DeoR"/>
    <property type="match status" value="1"/>
</dbReference>
<dbReference type="PRINTS" id="PR00037">
    <property type="entry name" value="HTHLACR"/>
</dbReference>
<dbReference type="SMART" id="SM01134">
    <property type="entry name" value="DeoRC"/>
    <property type="match status" value="1"/>
</dbReference>
<dbReference type="SMART" id="SM00420">
    <property type="entry name" value="HTH_DEOR"/>
    <property type="match status" value="1"/>
</dbReference>
<dbReference type="SUPFAM" id="SSF100950">
    <property type="entry name" value="NagB/RpiA/CoA transferase-like"/>
    <property type="match status" value="1"/>
</dbReference>
<dbReference type="SUPFAM" id="SSF46785">
    <property type="entry name" value="Winged helix' DNA-binding domain"/>
    <property type="match status" value="1"/>
</dbReference>
<dbReference type="PROSITE" id="PS00894">
    <property type="entry name" value="HTH_DEOR_1"/>
    <property type="match status" value="1"/>
</dbReference>
<dbReference type="PROSITE" id="PS51000">
    <property type="entry name" value="HTH_DEOR_2"/>
    <property type="match status" value="1"/>
</dbReference>
<organism>
    <name type="scientific">Staphylococcus aureus (strain N315)</name>
    <dbReference type="NCBI Taxonomy" id="158879"/>
    <lineage>
        <taxon>Bacteria</taxon>
        <taxon>Bacillati</taxon>
        <taxon>Bacillota</taxon>
        <taxon>Bacilli</taxon>
        <taxon>Bacillales</taxon>
        <taxon>Staphylococcaceae</taxon>
        <taxon>Staphylococcus</taxon>
    </lineage>
</organism>
<accession>P67744</accession>
<accession>Q99S73</accession>
<name>LACR_STAAN</name>
<protein>
    <recommendedName>
        <fullName>Lactose phosphotransferase system repressor</fullName>
    </recommendedName>
</protein>
<comment type="function">
    <text evidence="1">Repressor of the lactose catabolism operon. Galactose-6-phosphate is the inducer (By similarity).</text>
</comment>
<feature type="chain" id="PRO_0000050259" description="Lactose phosphotransferase system repressor">
    <location>
        <begin position="1"/>
        <end position="251"/>
    </location>
</feature>
<feature type="domain" description="HTH deoR-type" evidence="2">
    <location>
        <begin position="3"/>
        <end position="58"/>
    </location>
</feature>
<feature type="DNA-binding region" description="H-T-H motif" evidence="2">
    <location>
        <begin position="20"/>
        <end position="39"/>
    </location>
</feature>